<reference key="1">
    <citation type="journal article" date="1993" name="J. Biol. Chem.">
        <title>Aristolochene synthase. Isolation, characterization, and bacterial expression of a sesquiterpenoid biosynthetic gene (Ari1) from Penicillium roqueforti.</title>
        <authorList>
            <person name="Proctor R.H."/>
            <person name="Hohn T.M."/>
        </authorList>
    </citation>
    <scope>NUCLEOTIDE SEQUENCE [GENOMIC DNA]</scope>
    <scope>PROTEIN SEQUENCE OF 56-70; 76-84; 245-251 AND 323-336</scope>
    <scope>FUNCTION</scope>
    <scope>CATALYTIC ACTIVITY</scope>
    <source>
        <strain>ATCC 10110 / BCRC 32359 / CBS 221.30 / JCM 22842 / NBRC 5459 / NCTC 588 / NRRL 849</strain>
    </source>
</reference>
<reference key="2">
    <citation type="journal article" date="1980" name="Appl. Environ. Microbiol.">
        <title>Production of eremofortins A, B, and C relative to formation of PR toxin by Penicillium roqueforti.</title>
        <authorList>
            <person name="Moreau S."/>
            <person name="Lablache-Combier A."/>
            <person name="Biguet J."/>
        </authorList>
    </citation>
    <scope>FUNCTION</scope>
</reference>
<reference key="3">
    <citation type="journal article" date="2004" name="J. Am. Chem. Soc.">
        <title>Aristolochene synthase: mechanistic analysis of active site residues by site-directed mutagenesis.</title>
        <authorList>
            <person name="Felicetti B."/>
            <person name="Cane D.E."/>
        </authorList>
    </citation>
    <scope>FUNCTION</scope>
    <scope>CATALYTIC ACTIVITY</scope>
    <scope>BIOPHYSICOCHEMICAL PROPERTIES</scope>
    <scope>MUTAGENESIS OF TYR-92; ASP-115; ASN-244; SER-248 AND GLU-252</scope>
</reference>
<reference key="4">
    <citation type="journal article" date="2014" name="Fungal Genet. Biol.">
        <title>Molecular characterization of the PR-toxin gene cluster in Penicillium roqueforti and Penicillium chrysogenum: cross talk of secondary metabolite pathways.</title>
        <authorList>
            <person name="Hidalgo P.I."/>
            <person name="Ullan R.V."/>
            <person name="Albillos S.M."/>
            <person name="Montero O."/>
            <person name="Fernandez-Bodega M.A."/>
            <person name="Garcia-Estrada C."/>
            <person name="Fernandez-Aguado M."/>
            <person name="Martin J.F."/>
        </authorList>
    </citation>
    <scope>FUNCTION</scope>
    <scope>DISRUPTION PHENOTYPE</scope>
</reference>
<reference key="5">
    <citation type="journal article" date="2015" name="Angew. Chem. Int. Ed.">
        <title>Identification of intermediates in the biosynthesis of PR toxin by Penicillium roqueforti.</title>
        <authorList>
            <person name="Riclea R."/>
            <person name="Dickschat J.S."/>
        </authorList>
    </citation>
    <scope>FUNCTION</scope>
</reference>
<reference key="6">
    <citation type="journal article" date="2017" name="Appl. Microbiol. Biotechnol.">
        <title>Penicillium roqueforti PR toxin gene cluster characterization.</title>
        <authorList>
            <person name="Hidalgo P.I."/>
            <person name="Poirier E."/>
            <person name="Ullan R.V."/>
            <person name="Piqueras J."/>
            <person name="Meslet-Cladiere L."/>
            <person name="Coton E."/>
            <person name="Coton M."/>
        </authorList>
    </citation>
    <scope>FUNCTION</scope>
    <scope>PATHWAY</scope>
</reference>
<reference evidence="13" key="7">
    <citation type="journal article" date="2000" name="J. Biol. Chem.">
        <title>Crystal structure determination of aristolochene synthase from the blue cheese mold, Penicillium roqueforti.</title>
        <authorList>
            <person name="Caruthers J.M."/>
            <person name="Kang I."/>
            <person name="Rynkiewicz M.J."/>
            <person name="Cane D.E."/>
            <person name="Christianson D.W."/>
        </authorList>
    </citation>
    <scope>X-RAY CRYSTALLOGRAPHY (2.5 ANGSTROMS)</scope>
    <scope>3D-STRUCTURE MODELING</scope>
</reference>
<gene>
    <name evidence="10" type="primary">prx2</name>
    <name evidence="9" type="synonym">ari1</name>
    <name evidence="11" type="synonym">ORF2</name>
</gene>
<protein>
    <recommendedName>
        <fullName evidence="9">Aristolochene synthase</fullName>
        <shortName evidence="9">AS</shortName>
        <ecNumber evidence="3 8">4.2.3.9</ecNumber>
    </recommendedName>
    <alternativeName>
        <fullName evidence="10">PR-toxin biosynthesis protein 2</fullName>
    </alternativeName>
    <alternativeName>
        <fullName evidence="9">Sesquiterpene cyclase</fullName>
    </alternativeName>
</protein>
<accession>Q03471</accession>
<dbReference type="EC" id="4.2.3.9" evidence="3 8"/>
<dbReference type="EMBL" id="L05193">
    <property type="protein sequence ID" value="AAA33694.1"/>
    <property type="molecule type" value="Genomic_DNA"/>
</dbReference>
<dbReference type="PIR" id="A45462">
    <property type="entry name" value="A45462"/>
</dbReference>
<dbReference type="PDB" id="1DGP">
    <property type="method" value="X-ray"/>
    <property type="resolution" value="2.80 A"/>
    <property type="chains" value="A/B=40-339"/>
</dbReference>
<dbReference type="PDB" id="1DI1">
    <property type="method" value="X-ray"/>
    <property type="resolution" value="2.50 A"/>
    <property type="chains" value="A/B=40-339"/>
</dbReference>
<dbReference type="PDBsum" id="1DGP"/>
<dbReference type="PDBsum" id="1DI1"/>
<dbReference type="SMR" id="Q03471"/>
<dbReference type="KEGG" id="ag:AAA33694"/>
<dbReference type="OMA" id="FQMSGNE"/>
<dbReference type="PhylomeDB" id="Q03471"/>
<dbReference type="BioCyc" id="MetaCyc:MONOMER-16547"/>
<dbReference type="BRENDA" id="4.2.3.9">
    <property type="organism ID" value="4638"/>
</dbReference>
<dbReference type="SABIO-RK" id="Q03471"/>
<dbReference type="UniPathway" id="UPA00177">
    <property type="reaction ID" value="UER00582"/>
</dbReference>
<dbReference type="EvolutionaryTrace" id="Q03471"/>
<dbReference type="GO" id="GO:0045483">
    <property type="term" value="F:aristolochene synthase activity"/>
    <property type="evidence" value="ECO:0007669"/>
    <property type="project" value="UniProtKB-EC"/>
</dbReference>
<dbReference type="GO" id="GO:0046872">
    <property type="term" value="F:metal ion binding"/>
    <property type="evidence" value="ECO:0007669"/>
    <property type="project" value="UniProtKB-KW"/>
</dbReference>
<dbReference type="GO" id="GO:0008299">
    <property type="term" value="P:isoprenoid biosynthetic process"/>
    <property type="evidence" value="ECO:0007669"/>
    <property type="project" value="UniProtKB-ARBA"/>
</dbReference>
<dbReference type="CDD" id="cd00687">
    <property type="entry name" value="Terpene_cyclase_nonplant_C1"/>
    <property type="match status" value="1"/>
</dbReference>
<dbReference type="Gene3D" id="1.10.600.10">
    <property type="entry name" value="Farnesyl Diphosphate Synthase"/>
    <property type="match status" value="1"/>
</dbReference>
<dbReference type="InterPro" id="IPR008949">
    <property type="entry name" value="Isoprenoid_synthase_dom_sf"/>
</dbReference>
<dbReference type="InterPro" id="IPR034686">
    <property type="entry name" value="Terpene_cyclase-like_2"/>
</dbReference>
<dbReference type="PANTHER" id="PTHR35201:SF4">
    <property type="entry name" value="BETA-PINACENE SYNTHASE-RELATED"/>
    <property type="match status" value="1"/>
</dbReference>
<dbReference type="PANTHER" id="PTHR35201">
    <property type="entry name" value="TERPENE SYNTHASE"/>
    <property type="match status" value="1"/>
</dbReference>
<dbReference type="Pfam" id="PF19086">
    <property type="entry name" value="Terpene_syn_C_2"/>
    <property type="match status" value="1"/>
</dbReference>
<dbReference type="SUPFAM" id="SSF48576">
    <property type="entry name" value="Terpenoid synthases"/>
    <property type="match status" value="1"/>
</dbReference>
<proteinExistence type="evidence at protein level"/>
<comment type="function">
    <text evidence="3 4 5 6 7 8">Aristolochene synthase; part of the gene cluster that mediates the biosynthesis of PR-toxin, a bicyclic sesquiterpene belonging to the eremophilane class and acting as a mycotoxin (PubMed:24239699, PubMed:27921136). The first step of the pathway is catalyzed by the aristolochene synthase which performs the cyclization of trans,trans-farnesyl diphosphate (FPP) to the bicyclic sesquiterpene aristolochene (PubMed:15186158, PubMed:24239699, PubMed:8440737). Following the formation of aristolochene, the non-oxygenated aristolochene is converted to the trioxygenated intermediate eremofortin B, via 7-epi-neopetasone (PubMed:24239699, PubMed:26274339). This conversion appears to involve three enzymes, a hydroxysterol oxidase-like enzyme, the quinone-oxidase prx3 that forms the quinone-type-structure in the bicyclic nucleus of aristolochene with the C8-oxo group and the C-3 hydroxyl group, and the P450 monooxygenase ORF6 that introduces the epoxide at the double bond between carbons 1 and 2 (PubMed:24239699, PubMed:27921136). No monoxy or dioxy-intermediates have been reported to be released to the broth, so these three early oxidative reactions may be coupled together (PubMed:24239699). Eremofortin B is further oxidized by another P450 monooxygenase, that introduces a second epoxide between carbons 7 and 11 prior to acetylation to eremofortin A by the acetyltransferase ORF8 (PubMed:16345540, PubMed:24239699, PubMed:27921136). The second epoxidation may be performed by a second P450 monooxygenase (PubMed:24239699). After the acetylation step, the conversion of eremofortin A to eremofortin C and then to PR-toxin requires only two enzymes (PubMed:24239699). First the conversion of eremofortin A to eremofortin C proceeds by oxidation of the side chain of the molecule at C-12 and is catalyzed by the short-chain oxidoreductase prx1 (PubMed:16345540, PubMed:24239699). The cytochrome P450 monooxygenase ORF5 also plays a role in this step (PubMed:27921136). The primary alcohol formed at C-12 is finally oxidized by the short-chain alcohol dehydrogenase prx4 that forms PR-toxin (PubMed:16345540, PubMed:24239699).</text>
</comment>
<comment type="catalytic activity">
    <reaction evidence="3 8">
        <text>(2E,6E)-farnesyl diphosphate = (+)-aristolochene + diphosphate</text>
        <dbReference type="Rhea" id="RHEA:19825"/>
        <dbReference type="ChEBI" id="CHEBI:33019"/>
        <dbReference type="ChEBI" id="CHEBI:43445"/>
        <dbReference type="ChEBI" id="CHEBI:175763"/>
        <dbReference type="EC" id="4.2.3.9"/>
    </reaction>
</comment>
<comment type="cofactor">
    <cofactor evidence="1">
        <name>Mg(2+)</name>
        <dbReference type="ChEBI" id="CHEBI:18420"/>
    </cofactor>
    <text evidence="1">Binds 3 Mg(2+) ions per subunit.</text>
</comment>
<comment type="biophysicochemical properties">
    <kinetics>
        <KM evidence="3">0.6 uM for (2E,6E)-farnesyl diphosphate</KM>
    </kinetics>
</comment>
<comment type="pathway">
    <text evidence="3 8">Sesquiterpene biosynthesis; aristolochene biosynthesis; aristolochene from farnesyl diphosphate: step 1/1.</text>
</comment>
<comment type="subunit">
    <text evidence="1">Homodimer.</text>
</comment>
<comment type="disruption phenotype">
    <text evidence="5">Reduces the production of PR-toxin and leads to a large increase in mycophenolic acid production (PubMed:24239699).</text>
</comment>
<comment type="similarity">
    <text evidence="12">Belongs to the terpene synthase family.</text>
</comment>
<evidence type="ECO:0000250" key="1">
    <source>
        <dbReference type="UniProtKB" id="Q9UR08"/>
    </source>
</evidence>
<evidence type="ECO:0000269" key="2">
    <source>
    </source>
</evidence>
<evidence type="ECO:0000269" key="3">
    <source>
    </source>
</evidence>
<evidence type="ECO:0000269" key="4">
    <source>
    </source>
</evidence>
<evidence type="ECO:0000269" key="5">
    <source>
    </source>
</evidence>
<evidence type="ECO:0000269" key="6">
    <source>
    </source>
</evidence>
<evidence type="ECO:0000269" key="7">
    <source>
    </source>
</evidence>
<evidence type="ECO:0000269" key="8">
    <source>
    </source>
</evidence>
<evidence type="ECO:0000303" key="9">
    <source>
    </source>
</evidence>
<evidence type="ECO:0000303" key="10">
    <source>
    </source>
</evidence>
<evidence type="ECO:0000303" key="11">
    <source>
    </source>
</evidence>
<evidence type="ECO:0000305" key="12"/>
<evidence type="ECO:0007744" key="13">
    <source>
        <dbReference type="PDB" id="1DI1"/>
    </source>
</evidence>
<evidence type="ECO:0007829" key="14">
    <source>
        <dbReference type="PDB" id="1DI1"/>
    </source>
</evidence>
<feature type="chain" id="PRO_0000064677" description="Aristolochene synthase">
    <location>
        <begin position="1"/>
        <end position="342"/>
    </location>
</feature>
<feature type="binding site" evidence="1">
    <location>
        <position position="115"/>
    </location>
    <ligand>
        <name>Mg(2+)</name>
        <dbReference type="ChEBI" id="CHEBI:18420"/>
        <label>1</label>
    </ligand>
</feature>
<feature type="binding site" evidence="1">
    <location>
        <position position="115"/>
    </location>
    <ligand>
        <name>Mg(2+)</name>
        <dbReference type="ChEBI" id="CHEBI:18420"/>
        <label>2</label>
    </ligand>
</feature>
<feature type="binding site" evidence="1">
    <location>
        <position position="244"/>
    </location>
    <ligand>
        <name>Mg(2+)</name>
        <dbReference type="ChEBI" id="CHEBI:18420"/>
        <label>3</label>
    </ligand>
</feature>
<feature type="binding site" evidence="1">
    <location>
        <position position="248"/>
    </location>
    <ligand>
        <name>Mg(2+)</name>
        <dbReference type="ChEBI" id="CHEBI:18420"/>
        <label>3</label>
    </ligand>
</feature>
<feature type="binding site" evidence="1">
    <location>
        <position position="252"/>
    </location>
    <ligand>
        <name>Mg(2+)</name>
        <dbReference type="ChEBI" id="CHEBI:18420"/>
        <label>3</label>
    </ligand>
</feature>
<feature type="binding site" evidence="1">
    <location>
        <position position="340"/>
    </location>
    <ligand>
        <name>(2E,6E)-farnesyl diphosphate</name>
        <dbReference type="ChEBI" id="CHEBI:175763"/>
    </ligand>
</feature>
<feature type="binding site" evidence="1">
    <location>
        <position position="341"/>
    </location>
    <ligand>
        <name>(2E,6E)-farnesyl diphosphate</name>
        <dbReference type="ChEBI" id="CHEBI:175763"/>
    </ligand>
</feature>
<feature type="site" description="Important for catalytic activity" evidence="2 13">
    <location>
        <position position="92"/>
    </location>
</feature>
<feature type="site" description="Important for catalytic activity" evidence="2 13">
    <location>
        <position position="112"/>
    </location>
</feature>
<feature type="site" description="Important for catalytic activity" evidence="2 13">
    <location>
        <position position="178"/>
    </location>
</feature>
<feature type="site" description="Important for catalytic activity" evidence="2 13">
    <location>
        <position position="334"/>
    </location>
</feature>
<feature type="mutagenesis site" description="Causes 100-fold reduction in kcat but a 50-fold decrease in KM, resulting in a 2-fold decrease in catalytic efficiency." evidence="3">
    <original>Y</original>
    <variation>F</variation>
    <location>
        <position position="92"/>
    </location>
</feature>
<feature type="mutagenesis site" description="Abolishes catalytic activity." evidence="3">
    <original>D</original>
    <variation>N</variation>
    <location>
        <position position="115"/>
    </location>
</feature>
<feature type="mutagenesis site" description="Abolishes catalytic activity." evidence="3">
    <original>N</original>
    <variation>L</variation>
    <location>
        <position position="244"/>
    </location>
</feature>
<feature type="mutagenesis site" description="Abolishes catalytic activity; when associated with D-252." evidence="3">
    <original>S</original>
    <variation>A</variation>
    <location>
        <position position="248"/>
    </location>
</feature>
<feature type="mutagenesis site" description="Abolishes catalytic activity; when associated with A-248." evidence="3">
    <original>E</original>
    <variation>D</variation>
    <location>
        <position position="252"/>
    </location>
</feature>
<feature type="helix" evidence="14">
    <location>
        <begin position="54"/>
        <end position="68"/>
    </location>
</feature>
<feature type="helix" evidence="14">
    <location>
        <begin position="74"/>
        <end position="83"/>
    </location>
</feature>
<feature type="helix" evidence="14">
    <location>
        <begin position="85"/>
        <end position="92"/>
    </location>
</feature>
<feature type="turn" evidence="14">
    <location>
        <begin position="98"/>
        <end position="100"/>
    </location>
</feature>
<feature type="helix" evidence="14">
    <location>
        <begin position="101"/>
        <end position="120"/>
    </location>
</feature>
<feature type="helix" evidence="14">
    <location>
        <begin position="123"/>
        <end position="137"/>
    </location>
</feature>
<feature type="helix" evidence="14">
    <location>
        <begin position="148"/>
        <end position="180"/>
    </location>
</feature>
<feature type="turn" evidence="14">
    <location>
        <begin position="181"/>
        <end position="183"/>
    </location>
</feature>
<feature type="helix" evidence="14">
    <location>
        <begin position="193"/>
        <end position="201"/>
    </location>
</feature>
<feature type="helix" evidence="14">
    <location>
        <begin position="204"/>
        <end position="217"/>
    </location>
</feature>
<feature type="helix" evidence="14">
    <location>
        <begin position="223"/>
        <end position="227"/>
    </location>
</feature>
<feature type="helix" evidence="14">
    <location>
        <begin position="230"/>
        <end position="248"/>
    </location>
</feature>
<feature type="turn" evidence="14">
    <location>
        <begin position="249"/>
        <end position="252"/>
    </location>
</feature>
<feature type="helix" evidence="14">
    <location>
        <begin position="269"/>
        <end position="277"/>
    </location>
</feature>
<feature type="helix" evidence="14">
    <location>
        <begin position="281"/>
        <end position="307"/>
    </location>
</feature>
<feature type="helix" evidence="14">
    <location>
        <begin position="315"/>
        <end position="336"/>
    </location>
</feature>
<organism>
    <name type="scientific">Penicillium roqueforti</name>
    <dbReference type="NCBI Taxonomy" id="5082"/>
    <lineage>
        <taxon>Eukaryota</taxon>
        <taxon>Fungi</taxon>
        <taxon>Dikarya</taxon>
        <taxon>Ascomycota</taxon>
        <taxon>Pezizomycotina</taxon>
        <taxon>Eurotiomycetes</taxon>
        <taxon>Eurotiomycetidae</taxon>
        <taxon>Eurotiales</taxon>
        <taxon>Aspergillaceae</taxon>
        <taxon>Penicillium</taxon>
    </lineage>
</organism>
<sequence>MATSTETISSLAQPFVHLENPINSPLVKETIRPRNDTTITPPPTQWSYLCHPRVKEVQDEVDGYFLENWKFPSFKAVRTFLDAKFSEVTCLYFPLALDDRIHFACRLLTVLFLIDDVLEHMSFADGEAYNNRLIPISRGDVLPDRTKPEEFILYDLWESMRAHDAELANEVLEPTFVFMRAQTDRARLSIHELGHYLEYREKDVGKALLSALMRFSMGLRLSADELQDMKALEANCAKQLSVVNDIYSYDKEEEASRTGHKEGAFLCSAVKVLAEESKLGIPATKRVLWSMTREWETVHDEIVAEKIASPDGCSEAAKAYMKGLEYQMSGNEQWSKTTRRYN</sequence>
<name>PRX2_PENRO</name>
<keyword id="KW-0002">3D-structure</keyword>
<keyword id="KW-0903">Direct protein sequencing</keyword>
<keyword id="KW-0456">Lyase</keyword>
<keyword id="KW-0460">Magnesium</keyword>
<keyword id="KW-0479">Metal-binding</keyword>